<proteinExistence type="evidence at protein level"/>
<reference key="1">
    <citation type="journal article" date="2002" name="Nature">
        <title>The genome sequence of Schizosaccharomyces pombe.</title>
        <authorList>
            <person name="Wood V."/>
            <person name="Gwilliam R."/>
            <person name="Rajandream M.A."/>
            <person name="Lyne M.H."/>
            <person name="Lyne R."/>
            <person name="Stewart A."/>
            <person name="Sgouros J.G."/>
            <person name="Peat N."/>
            <person name="Hayles J."/>
            <person name="Baker S.G."/>
            <person name="Basham D."/>
            <person name="Bowman S."/>
            <person name="Brooks K."/>
            <person name="Brown D."/>
            <person name="Brown S."/>
            <person name="Chillingworth T."/>
            <person name="Churcher C.M."/>
            <person name="Collins M."/>
            <person name="Connor R."/>
            <person name="Cronin A."/>
            <person name="Davis P."/>
            <person name="Feltwell T."/>
            <person name="Fraser A."/>
            <person name="Gentles S."/>
            <person name="Goble A."/>
            <person name="Hamlin N."/>
            <person name="Harris D.E."/>
            <person name="Hidalgo J."/>
            <person name="Hodgson G."/>
            <person name="Holroyd S."/>
            <person name="Hornsby T."/>
            <person name="Howarth S."/>
            <person name="Huckle E.J."/>
            <person name="Hunt S."/>
            <person name="Jagels K."/>
            <person name="James K.D."/>
            <person name="Jones L."/>
            <person name="Jones M."/>
            <person name="Leather S."/>
            <person name="McDonald S."/>
            <person name="McLean J."/>
            <person name="Mooney P."/>
            <person name="Moule S."/>
            <person name="Mungall K.L."/>
            <person name="Murphy L.D."/>
            <person name="Niblett D."/>
            <person name="Odell C."/>
            <person name="Oliver K."/>
            <person name="O'Neil S."/>
            <person name="Pearson D."/>
            <person name="Quail M.A."/>
            <person name="Rabbinowitsch E."/>
            <person name="Rutherford K.M."/>
            <person name="Rutter S."/>
            <person name="Saunders D."/>
            <person name="Seeger K."/>
            <person name="Sharp S."/>
            <person name="Skelton J."/>
            <person name="Simmonds M.N."/>
            <person name="Squares R."/>
            <person name="Squares S."/>
            <person name="Stevens K."/>
            <person name="Taylor K."/>
            <person name="Taylor R.G."/>
            <person name="Tivey A."/>
            <person name="Walsh S.V."/>
            <person name="Warren T."/>
            <person name="Whitehead S."/>
            <person name="Woodward J.R."/>
            <person name="Volckaert G."/>
            <person name="Aert R."/>
            <person name="Robben J."/>
            <person name="Grymonprez B."/>
            <person name="Weltjens I."/>
            <person name="Vanstreels E."/>
            <person name="Rieger M."/>
            <person name="Schaefer M."/>
            <person name="Mueller-Auer S."/>
            <person name="Gabel C."/>
            <person name="Fuchs M."/>
            <person name="Duesterhoeft A."/>
            <person name="Fritzc C."/>
            <person name="Holzer E."/>
            <person name="Moestl D."/>
            <person name="Hilbert H."/>
            <person name="Borzym K."/>
            <person name="Langer I."/>
            <person name="Beck A."/>
            <person name="Lehrach H."/>
            <person name="Reinhardt R."/>
            <person name="Pohl T.M."/>
            <person name="Eger P."/>
            <person name="Zimmermann W."/>
            <person name="Wedler H."/>
            <person name="Wambutt R."/>
            <person name="Purnelle B."/>
            <person name="Goffeau A."/>
            <person name="Cadieu E."/>
            <person name="Dreano S."/>
            <person name="Gloux S."/>
            <person name="Lelaure V."/>
            <person name="Mottier S."/>
            <person name="Galibert F."/>
            <person name="Aves S.J."/>
            <person name="Xiang Z."/>
            <person name="Hunt C."/>
            <person name="Moore K."/>
            <person name="Hurst S.M."/>
            <person name="Lucas M."/>
            <person name="Rochet M."/>
            <person name="Gaillardin C."/>
            <person name="Tallada V.A."/>
            <person name="Garzon A."/>
            <person name="Thode G."/>
            <person name="Daga R.R."/>
            <person name="Cruzado L."/>
            <person name="Jimenez J."/>
            <person name="Sanchez M."/>
            <person name="del Rey F."/>
            <person name="Benito J."/>
            <person name="Dominguez A."/>
            <person name="Revuelta J.L."/>
            <person name="Moreno S."/>
            <person name="Armstrong J."/>
            <person name="Forsburg S.L."/>
            <person name="Cerutti L."/>
            <person name="Lowe T."/>
            <person name="McCombie W.R."/>
            <person name="Paulsen I."/>
            <person name="Potashkin J."/>
            <person name="Shpakovski G.V."/>
            <person name="Ussery D."/>
            <person name="Barrell B.G."/>
            <person name="Nurse P."/>
        </authorList>
    </citation>
    <scope>NUCLEOTIDE SEQUENCE [LARGE SCALE GENOMIC DNA]</scope>
    <source>
        <strain>972 / ATCC 24843</strain>
    </source>
</reference>
<reference key="2">
    <citation type="journal article" date="2002" name="Cell">
        <title>Cid13 is a cytoplasmic poly(A) polymerase that regulates ribonucleotide reductase mRNA.</title>
        <authorList>
            <person name="Saitoh S."/>
            <person name="Chabes A."/>
            <person name="McDonald W.H."/>
            <person name="Thelander L."/>
            <person name="Yates J.R. III"/>
            <person name="Russell P."/>
        </authorList>
    </citation>
    <scope>FUNCTION</scope>
    <scope>CATALYTIC ACTIVITY</scope>
    <scope>INTERACTION WITH PAB1</scope>
    <scope>SUBCELLULAR LOCATION</scope>
</reference>
<reference key="3">
    <citation type="journal article" date="2006" name="Nat. Biotechnol.">
        <title>ORFeome cloning and global analysis of protein localization in the fission yeast Schizosaccharomyces pombe.</title>
        <authorList>
            <person name="Matsuyama A."/>
            <person name="Arai R."/>
            <person name="Yashiroda Y."/>
            <person name="Shirai A."/>
            <person name="Kamata A."/>
            <person name="Sekido S."/>
            <person name="Kobayashi Y."/>
            <person name="Hashimoto A."/>
            <person name="Hamamoto M."/>
            <person name="Hiraoka Y."/>
            <person name="Horinouchi S."/>
            <person name="Yoshida M."/>
        </authorList>
    </citation>
    <scope>SUBCELLULAR LOCATION [LARGE SCALE ANALYSIS]</scope>
</reference>
<feature type="chain" id="PRO_0000120313" description="Poly(A) RNA polymerase cid13">
    <location>
        <begin position="1"/>
        <end position="578"/>
    </location>
</feature>
<feature type="domain" description="PAP-associated">
    <location>
        <begin position="275"/>
        <end position="330"/>
    </location>
</feature>
<feature type="region of interest" description="Disordered" evidence="2">
    <location>
        <begin position="495"/>
        <end position="565"/>
    </location>
</feature>
<feature type="compositionally biased region" description="Basic and acidic residues" evidence="2">
    <location>
        <begin position="496"/>
        <end position="510"/>
    </location>
</feature>
<feature type="compositionally biased region" description="Basic residues" evidence="2">
    <location>
        <begin position="516"/>
        <end position="527"/>
    </location>
</feature>
<feature type="compositionally biased region" description="Low complexity" evidence="2">
    <location>
        <begin position="547"/>
        <end position="565"/>
    </location>
</feature>
<feature type="binding site" evidence="1">
    <location>
        <position position="110"/>
    </location>
    <ligand>
        <name>Mg(2+)</name>
        <dbReference type="ChEBI" id="CHEBI:18420"/>
        <note>catalytic</note>
    </ligand>
</feature>
<feature type="binding site" evidence="1">
    <location>
        <position position="112"/>
    </location>
    <ligand>
        <name>Mg(2+)</name>
        <dbReference type="ChEBI" id="CHEBI:18420"/>
        <note>catalytic</note>
    </ligand>
</feature>
<comment type="function">
    <text evidence="3">Polymerase that creates the 3' poly(A) tail of suc22 mRNA.</text>
</comment>
<comment type="catalytic activity">
    <reaction evidence="3">
        <text>RNA(n) + ATP = RNA(n)-3'-adenine ribonucleotide + diphosphate</text>
        <dbReference type="Rhea" id="RHEA:11332"/>
        <dbReference type="Rhea" id="RHEA-COMP:14527"/>
        <dbReference type="Rhea" id="RHEA-COMP:17347"/>
        <dbReference type="ChEBI" id="CHEBI:30616"/>
        <dbReference type="ChEBI" id="CHEBI:33019"/>
        <dbReference type="ChEBI" id="CHEBI:140395"/>
        <dbReference type="ChEBI" id="CHEBI:173115"/>
        <dbReference type="EC" id="2.7.7.19"/>
    </reaction>
    <physiologicalReaction direction="left-to-right" evidence="3">
        <dbReference type="Rhea" id="RHEA:11333"/>
    </physiologicalReaction>
</comment>
<comment type="cofactor">
    <cofactor evidence="1">
        <name>Mg(2+)</name>
        <dbReference type="ChEBI" id="CHEBI:18420"/>
    </cofactor>
    <cofactor evidence="1">
        <name>Mn(2+)</name>
        <dbReference type="ChEBI" id="CHEBI:29035"/>
    </cofactor>
</comment>
<comment type="subunit">
    <text evidence="3">Interacts with pab1.</text>
</comment>
<comment type="subcellular location">
    <subcellularLocation>
        <location evidence="3 4">Cytoplasm</location>
    </subcellularLocation>
    <subcellularLocation>
        <location evidence="4">Nucleus</location>
    </subcellularLocation>
</comment>
<comment type="similarity">
    <text evidence="5">Belongs to the DNA polymerase type-B-like family.</text>
</comment>
<accession>Q9UT49</accession>
<keyword id="KW-0067">ATP-binding</keyword>
<keyword id="KW-0963">Cytoplasm</keyword>
<keyword id="KW-0460">Magnesium</keyword>
<keyword id="KW-0464">Manganese</keyword>
<keyword id="KW-0479">Metal-binding</keyword>
<keyword id="KW-0507">mRNA processing</keyword>
<keyword id="KW-0547">Nucleotide-binding</keyword>
<keyword id="KW-0539">Nucleus</keyword>
<keyword id="KW-1185">Reference proteome</keyword>
<keyword id="KW-0694">RNA-binding</keyword>
<keyword id="KW-0808">Transferase</keyword>
<gene>
    <name type="primary">cid13</name>
    <name type="ORF">SPAC821.04c</name>
</gene>
<evidence type="ECO:0000250" key="1"/>
<evidence type="ECO:0000256" key="2">
    <source>
        <dbReference type="SAM" id="MobiDB-lite"/>
    </source>
</evidence>
<evidence type="ECO:0000269" key="3">
    <source>
    </source>
</evidence>
<evidence type="ECO:0000269" key="4">
    <source>
    </source>
</evidence>
<evidence type="ECO:0000305" key="5"/>
<protein>
    <recommendedName>
        <fullName>Poly(A) RNA polymerase cid13</fullName>
        <shortName>PAP</shortName>
        <ecNumber evidence="3">2.7.7.19</ecNumber>
    </recommendedName>
    <alternativeName>
        <fullName>Caffeine-induced death protein 13</fullName>
    </alternativeName>
    <alternativeName>
        <fullName>Polynucleotide adenylyltransferase cid13</fullName>
    </alternativeName>
</protein>
<organism>
    <name type="scientific">Schizosaccharomyces pombe (strain 972 / ATCC 24843)</name>
    <name type="common">Fission yeast</name>
    <dbReference type="NCBI Taxonomy" id="284812"/>
    <lineage>
        <taxon>Eukaryota</taxon>
        <taxon>Fungi</taxon>
        <taxon>Dikarya</taxon>
        <taxon>Ascomycota</taxon>
        <taxon>Taphrinomycotina</taxon>
        <taxon>Schizosaccharomycetes</taxon>
        <taxon>Schizosaccharomycetales</taxon>
        <taxon>Schizosaccharomycetaceae</taxon>
        <taxon>Schizosaccharomyces</taxon>
    </lineage>
</organism>
<sequence>MDNANCVGGCKFETRSFQYRRRIPYSLGADPLPPVHPLSLKNLVDIDTDLISSQLYELYDSIILNDSGLERRYAFVQKLEQILKKEFPYKNIKTSLFGSTQSLLASNASDIDLCIITDPPQCAPTTCEVSAAFARNGLKKVVCISTAKVPIVKVWDSELQLSCDCNINKTISTLNTRLMRSYVLCDPRVRPLIVMIKYWAKRRCLNDAAEGGTLTSYTISCMVINFLQKRDPPILPSLQMLPHLQDSSTMTDGLDVSFFDDPDLVHGFGDKNEESLGILFVEFFRFFGYLFDYEHFVLSIRHGTFLSKRAKGWQFQLNNFLCVEEPFHTSRNLANTADEITMKGIQLEFRRVFRLLAYNCNVDDACSQFTFPSLTDTSFMDDYVNELQLEIVPGFSHGRDSSDTSCTESPPEPSHFAWAFDPYNATASPYYNQNINSSIDYSSIYSNDVPAIPPNVPYTFVDPYTYACYINNNSYLPPSYMDFYTWYNSPYPKSSHHFDERHGGDRHEKNLSNSRRYSRNKFHKKKQSSGPFQYYPDAFSFTPTDNNSPPSNSSSSEVVSPVSLHSEPVLSTVQAFKS</sequence>
<dbReference type="EC" id="2.7.7.19" evidence="3"/>
<dbReference type="EMBL" id="CU329670">
    <property type="protein sequence ID" value="CAB57438.1"/>
    <property type="molecule type" value="Genomic_DNA"/>
</dbReference>
<dbReference type="PIR" id="T41715">
    <property type="entry name" value="T41715"/>
</dbReference>
<dbReference type="RefSeq" id="NP_593157.1">
    <property type="nucleotide sequence ID" value="NM_001018555.2"/>
</dbReference>
<dbReference type="SMR" id="Q9UT49"/>
<dbReference type="BioGRID" id="279633">
    <property type="interactions" value="18"/>
</dbReference>
<dbReference type="FunCoup" id="Q9UT49">
    <property type="interactions" value="69"/>
</dbReference>
<dbReference type="IntAct" id="Q9UT49">
    <property type="interactions" value="6"/>
</dbReference>
<dbReference type="STRING" id="284812.Q9UT49"/>
<dbReference type="PaxDb" id="4896-SPAC821.04c.1"/>
<dbReference type="EnsemblFungi" id="SPAC821.04c.1">
    <property type="protein sequence ID" value="SPAC821.04c.1:pep"/>
    <property type="gene ID" value="SPAC821.04c"/>
</dbReference>
<dbReference type="GeneID" id="2543204"/>
<dbReference type="KEGG" id="spo:2543204"/>
<dbReference type="PomBase" id="SPAC821.04c">
    <property type="gene designation" value="cid13"/>
</dbReference>
<dbReference type="VEuPathDB" id="FungiDB:SPAC821.04c"/>
<dbReference type="eggNOG" id="KOG2277">
    <property type="taxonomic scope" value="Eukaryota"/>
</dbReference>
<dbReference type="HOGENOM" id="CLU_476635_0_0_1"/>
<dbReference type="InParanoid" id="Q9UT49"/>
<dbReference type="OMA" id="DCNINKT"/>
<dbReference type="PhylomeDB" id="Q9UT49"/>
<dbReference type="PRO" id="PR:Q9UT49"/>
<dbReference type="Proteomes" id="UP000002485">
    <property type="component" value="Chromosome I"/>
</dbReference>
<dbReference type="GO" id="GO:0005737">
    <property type="term" value="C:cytoplasm"/>
    <property type="evidence" value="ECO:0000314"/>
    <property type="project" value="PomBase"/>
</dbReference>
<dbReference type="GO" id="GO:0005829">
    <property type="term" value="C:cytosol"/>
    <property type="evidence" value="ECO:0007005"/>
    <property type="project" value="PomBase"/>
</dbReference>
<dbReference type="GO" id="GO:0005634">
    <property type="term" value="C:nucleus"/>
    <property type="evidence" value="ECO:0007669"/>
    <property type="project" value="UniProtKB-SubCell"/>
</dbReference>
<dbReference type="GO" id="GO:0005524">
    <property type="term" value="F:ATP binding"/>
    <property type="evidence" value="ECO:0007669"/>
    <property type="project" value="UniProtKB-KW"/>
</dbReference>
<dbReference type="GO" id="GO:0046872">
    <property type="term" value="F:metal ion binding"/>
    <property type="evidence" value="ECO:0007669"/>
    <property type="project" value="UniProtKB-KW"/>
</dbReference>
<dbReference type="GO" id="GO:0003730">
    <property type="term" value="F:mRNA 3'-UTR binding"/>
    <property type="evidence" value="ECO:0000303"/>
    <property type="project" value="PomBase"/>
</dbReference>
<dbReference type="GO" id="GO:0016779">
    <property type="term" value="F:nucleotidyltransferase activity"/>
    <property type="evidence" value="ECO:0000318"/>
    <property type="project" value="GO_Central"/>
</dbReference>
<dbReference type="GO" id="GO:1990817">
    <property type="term" value="F:poly(A) RNA polymerase activity"/>
    <property type="evidence" value="ECO:0000314"/>
    <property type="project" value="PomBase"/>
</dbReference>
<dbReference type="GO" id="GO:0070935">
    <property type="term" value="P:3'-UTR-mediated mRNA stabilization"/>
    <property type="evidence" value="ECO:0000315"/>
    <property type="project" value="PomBase"/>
</dbReference>
<dbReference type="GO" id="GO:0006397">
    <property type="term" value="P:mRNA processing"/>
    <property type="evidence" value="ECO:0007669"/>
    <property type="project" value="UniProtKB-KW"/>
</dbReference>
<dbReference type="GO" id="GO:0031123">
    <property type="term" value="P:RNA 3'-end processing"/>
    <property type="evidence" value="ECO:0000318"/>
    <property type="project" value="GO_Central"/>
</dbReference>
<dbReference type="CDD" id="cd05402">
    <property type="entry name" value="NT_PAP_TUTase"/>
    <property type="match status" value="1"/>
</dbReference>
<dbReference type="FunFam" id="1.10.1410.10:FF:000018">
    <property type="entry name" value="Terminal uridylyltransferase cid1"/>
    <property type="match status" value="1"/>
</dbReference>
<dbReference type="Gene3D" id="1.10.1410.10">
    <property type="match status" value="1"/>
</dbReference>
<dbReference type="Gene3D" id="3.30.460.10">
    <property type="entry name" value="Beta Polymerase, domain 2"/>
    <property type="match status" value="1"/>
</dbReference>
<dbReference type="InterPro" id="IPR054708">
    <property type="entry name" value="MTPAP-like_central"/>
</dbReference>
<dbReference type="InterPro" id="IPR043519">
    <property type="entry name" value="NT_sf"/>
</dbReference>
<dbReference type="InterPro" id="IPR002058">
    <property type="entry name" value="PAP_assoc"/>
</dbReference>
<dbReference type="PANTHER" id="PTHR12271">
    <property type="entry name" value="POLY A POLYMERASE CID PAP -RELATED"/>
    <property type="match status" value="1"/>
</dbReference>
<dbReference type="PANTHER" id="PTHR12271:SF131">
    <property type="entry name" value="POLY(A) RNA POLYMERASE CID13"/>
    <property type="match status" value="1"/>
</dbReference>
<dbReference type="Pfam" id="PF22600">
    <property type="entry name" value="MTPAP-like_central"/>
    <property type="match status" value="1"/>
</dbReference>
<dbReference type="Pfam" id="PF03828">
    <property type="entry name" value="PAP_assoc"/>
    <property type="match status" value="1"/>
</dbReference>
<dbReference type="SUPFAM" id="SSF81301">
    <property type="entry name" value="Nucleotidyltransferase"/>
    <property type="match status" value="1"/>
</dbReference>
<dbReference type="SUPFAM" id="SSF81631">
    <property type="entry name" value="PAP/OAS1 substrate-binding domain"/>
    <property type="match status" value="1"/>
</dbReference>
<name>CID13_SCHPO</name>